<evidence type="ECO:0000250" key="1">
    <source>
        <dbReference type="UniProtKB" id="Q14457"/>
    </source>
</evidence>
<evidence type="ECO:0000250" key="2">
    <source>
        <dbReference type="UniProtKB" id="Q91XJ1"/>
    </source>
</evidence>
<evidence type="ECO:0000255" key="3"/>
<evidence type="ECO:0000269" key="4">
    <source>
    </source>
</evidence>
<evidence type="ECO:0000269" key="5">
    <source>
    </source>
</evidence>
<evidence type="ECO:0000269" key="6">
    <source>
    </source>
</evidence>
<evidence type="ECO:0000269" key="7">
    <source>
    </source>
</evidence>
<evidence type="ECO:0000305" key="8"/>
<evidence type="ECO:0000305" key="9">
    <source>
    </source>
</evidence>
<feature type="chain" id="PRO_0000441635" description="Beclin-1">
    <location>
        <begin position="1"/>
        <end position="447"/>
    </location>
</feature>
<feature type="region of interest" description="Interaction with BCL2 and BCL2L1 isoform Bcl-X(L)" evidence="1">
    <location>
        <begin position="109"/>
        <end position="156"/>
    </location>
</feature>
<feature type="region of interest" description="Evolutionary conserved domain (ECD)" evidence="9">
    <location>
        <begin position="242"/>
        <end position="447"/>
    </location>
</feature>
<feature type="region of interest" description="Required for membrane-association" evidence="1">
    <location>
        <begin position="422"/>
        <end position="447"/>
    </location>
</feature>
<feature type="coiled-coil region" evidence="3">
    <location>
        <begin position="140"/>
        <end position="214"/>
    </location>
</feature>
<feature type="short sequence motif" description="BH3" evidence="1">
    <location>
        <begin position="105"/>
        <end position="124"/>
    </location>
</feature>
<feature type="cross-link" description="Glycyl lysine isopeptide (Lys-Gly) (interchain with G-Cter in ubiquitin)" evidence="1">
    <location>
        <position position="399"/>
    </location>
</feature>
<feature type="sequence conflict" description="In Ref. 1; BAF45347." evidence="8" ref="1">
    <original>C</original>
    <variation>R</variation>
    <location>
        <position position="254"/>
    </location>
</feature>
<gene>
    <name type="primary">becn1</name>
</gene>
<protein>
    <recommendedName>
        <fullName>Beclin-1</fullName>
    </recommendedName>
</protein>
<reference key="1">
    <citation type="submission" date="2006-07" db="EMBL/GenBank/DDBJ databases">
        <title>Cloning of zebrafish beclin1 gene.</title>
        <authorList>
            <person name="Yabu T."/>
            <person name="Yamashita M."/>
        </authorList>
    </citation>
    <scope>NUCLEOTIDE SEQUENCE [MRNA]</scope>
</reference>
<reference key="2">
    <citation type="journal article" date="2013" name="Nature">
        <title>The zebrafish reference genome sequence and its relationship to the human genome.</title>
        <authorList>
            <person name="Howe K."/>
            <person name="Clark M.D."/>
            <person name="Torroja C.F."/>
            <person name="Torrance J."/>
            <person name="Berthelot C."/>
            <person name="Muffato M."/>
            <person name="Collins J.E."/>
            <person name="Humphray S."/>
            <person name="McLaren K."/>
            <person name="Matthews L."/>
            <person name="McLaren S."/>
            <person name="Sealy I."/>
            <person name="Caccamo M."/>
            <person name="Churcher C."/>
            <person name="Scott C."/>
            <person name="Barrett J.C."/>
            <person name="Koch R."/>
            <person name="Rauch G.J."/>
            <person name="White S."/>
            <person name="Chow W."/>
            <person name="Kilian B."/>
            <person name="Quintais L.T."/>
            <person name="Guerra-Assuncao J.A."/>
            <person name="Zhou Y."/>
            <person name="Gu Y."/>
            <person name="Yen J."/>
            <person name="Vogel J.H."/>
            <person name="Eyre T."/>
            <person name="Redmond S."/>
            <person name="Banerjee R."/>
            <person name="Chi J."/>
            <person name="Fu B."/>
            <person name="Langley E."/>
            <person name="Maguire S.F."/>
            <person name="Laird G.K."/>
            <person name="Lloyd D."/>
            <person name="Kenyon E."/>
            <person name="Donaldson S."/>
            <person name="Sehra H."/>
            <person name="Almeida-King J."/>
            <person name="Loveland J."/>
            <person name="Trevanion S."/>
            <person name="Jones M."/>
            <person name="Quail M."/>
            <person name="Willey D."/>
            <person name="Hunt A."/>
            <person name="Burton J."/>
            <person name="Sims S."/>
            <person name="McLay K."/>
            <person name="Plumb B."/>
            <person name="Davis J."/>
            <person name="Clee C."/>
            <person name="Oliver K."/>
            <person name="Clark R."/>
            <person name="Riddle C."/>
            <person name="Elliot D."/>
            <person name="Threadgold G."/>
            <person name="Harden G."/>
            <person name="Ware D."/>
            <person name="Begum S."/>
            <person name="Mortimore B."/>
            <person name="Kerry G."/>
            <person name="Heath P."/>
            <person name="Phillimore B."/>
            <person name="Tracey A."/>
            <person name="Corby N."/>
            <person name="Dunn M."/>
            <person name="Johnson C."/>
            <person name="Wood J."/>
            <person name="Clark S."/>
            <person name="Pelan S."/>
            <person name="Griffiths G."/>
            <person name="Smith M."/>
            <person name="Glithero R."/>
            <person name="Howden P."/>
            <person name="Barker N."/>
            <person name="Lloyd C."/>
            <person name="Stevens C."/>
            <person name="Harley J."/>
            <person name="Holt K."/>
            <person name="Panagiotidis G."/>
            <person name="Lovell J."/>
            <person name="Beasley H."/>
            <person name="Henderson C."/>
            <person name="Gordon D."/>
            <person name="Auger K."/>
            <person name="Wright D."/>
            <person name="Collins J."/>
            <person name="Raisen C."/>
            <person name="Dyer L."/>
            <person name="Leung K."/>
            <person name="Robertson L."/>
            <person name="Ambridge K."/>
            <person name="Leongamornlert D."/>
            <person name="McGuire S."/>
            <person name="Gilderthorp R."/>
            <person name="Griffiths C."/>
            <person name="Manthravadi D."/>
            <person name="Nichol S."/>
            <person name="Barker G."/>
            <person name="Whitehead S."/>
            <person name="Kay M."/>
            <person name="Brown J."/>
            <person name="Murnane C."/>
            <person name="Gray E."/>
            <person name="Humphries M."/>
            <person name="Sycamore N."/>
            <person name="Barker D."/>
            <person name="Saunders D."/>
            <person name="Wallis J."/>
            <person name="Babbage A."/>
            <person name="Hammond S."/>
            <person name="Mashreghi-Mohammadi M."/>
            <person name="Barr L."/>
            <person name="Martin S."/>
            <person name="Wray P."/>
            <person name="Ellington A."/>
            <person name="Matthews N."/>
            <person name="Ellwood M."/>
            <person name="Woodmansey R."/>
            <person name="Clark G."/>
            <person name="Cooper J."/>
            <person name="Tromans A."/>
            <person name="Grafham D."/>
            <person name="Skuce C."/>
            <person name="Pandian R."/>
            <person name="Andrews R."/>
            <person name="Harrison E."/>
            <person name="Kimberley A."/>
            <person name="Garnett J."/>
            <person name="Fosker N."/>
            <person name="Hall R."/>
            <person name="Garner P."/>
            <person name="Kelly D."/>
            <person name="Bird C."/>
            <person name="Palmer S."/>
            <person name="Gehring I."/>
            <person name="Berger A."/>
            <person name="Dooley C.M."/>
            <person name="Ersan-Urun Z."/>
            <person name="Eser C."/>
            <person name="Geiger H."/>
            <person name="Geisler M."/>
            <person name="Karotki L."/>
            <person name="Kirn A."/>
            <person name="Konantz J."/>
            <person name="Konantz M."/>
            <person name="Oberlander M."/>
            <person name="Rudolph-Geiger S."/>
            <person name="Teucke M."/>
            <person name="Lanz C."/>
            <person name="Raddatz G."/>
            <person name="Osoegawa K."/>
            <person name="Zhu B."/>
            <person name="Rapp A."/>
            <person name="Widaa S."/>
            <person name="Langford C."/>
            <person name="Yang F."/>
            <person name="Schuster S.C."/>
            <person name="Carter N.P."/>
            <person name="Harrow J."/>
            <person name="Ning Z."/>
            <person name="Herrero J."/>
            <person name="Searle S.M."/>
            <person name="Enright A."/>
            <person name="Geisler R."/>
            <person name="Plasterk R.H."/>
            <person name="Lee C."/>
            <person name="Westerfield M."/>
            <person name="de Jong P.J."/>
            <person name="Zon L.I."/>
            <person name="Postlethwait J.H."/>
            <person name="Nusslein-Volhard C."/>
            <person name="Hubbard T.J."/>
            <person name="Roest Crollius H."/>
            <person name="Rogers J."/>
            <person name="Stemple D.L."/>
        </authorList>
    </citation>
    <scope>NUCLEOTIDE SEQUENCE [LARGE SCALE GENOMIC DNA]</scope>
    <source>
        <strain>Tuebingen</strain>
    </source>
</reference>
<reference key="3">
    <citation type="submission" date="2003-12" db="EMBL/GenBank/DDBJ databases">
        <authorList>
            <consortium name="NIH - Zebrafish Gene Collection (ZGC) project"/>
        </authorList>
    </citation>
    <scope>NUCLEOTIDE SEQUENCE [LARGE SCALE MRNA]</scope>
    <source>
        <tissue>Eye</tissue>
    </source>
</reference>
<reference key="4">
    <citation type="journal article" date="2013" name="Reprod. Fertil. Dev.">
        <title>Interplay between autophagy and apoptosis in the development of Danio rerio follicles and the effects of a probiotic.</title>
        <authorList>
            <person name="Gioacchini G."/>
            <person name="Dalla Valle L."/>
            <person name="Benato F."/>
            <person name="Fimia G.M."/>
            <person name="Nardacci R."/>
            <person name="Ciccosanti F."/>
            <person name="Piacentini M."/>
            <person name="Borini A."/>
            <person name="Carnevali O."/>
        </authorList>
    </citation>
    <scope>INDUCTION</scope>
</reference>
<reference key="5">
    <citation type="journal article" date="2014" name="Autophagy">
        <title>Autophagy is essential for cardiac morphogenesis during vertebrate development.</title>
        <authorList>
            <person name="Lee E."/>
            <person name="Koo Y."/>
            <person name="Ng A."/>
            <person name="Wei Y."/>
            <person name="Luby-Phelps K."/>
            <person name="Juraszek A."/>
            <person name="Xavier R.J."/>
            <person name="Cleaver O."/>
            <person name="Levine B."/>
            <person name="Amatruda J.F."/>
        </authorList>
    </citation>
    <scope>FUNCTION</scope>
    <scope>DISRUPTION PHENOTYPE</scope>
</reference>
<reference key="6">
    <citation type="journal article" date="2016" name="Autophagy">
        <title>Autophagy regulates cytoplasmic remodeling during cell reprogramming in a zebrafish model of muscle regeneration.</title>
        <authorList>
            <person name="Saera-Vila A."/>
            <person name="Kish P.E."/>
            <person name="Louie K.W."/>
            <person name="Grzegorski S.J."/>
            <person name="Klionsky D.J."/>
            <person name="Kahana A."/>
        </authorList>
    </citation>
    <scope>FUNCTION</scope>
    <scope>DISRUPTION PHENOTYPE</scope>
</reference>
<reference key="7">
    <citation type="journal article" date="2017" name="Nature">
        <title>Polyglutamine tracts regulate beclin 1-dependent autophagy.</title>
        <authorList>
            <person name="Ashkenazi A."/>
            <person name="Bento C.F."/>
            <person name="Ricketts T."/>
            <person name="Vicinanza M."/>
            <person name="Siddiqi F."/>
            <person name="Pavel M."/>
            <person name="Squitieri F."/>
            <person name="Hardenberg M.C."/>
            <person name="Imarisio S."/>
            <person name="Menzies F.M."/>
            <person name="Rubinsztein D.C."/>
        </authorList>
    </citation>
    <scope>FUNCTION</scope>
</reference>
<name>BECN1_DANRE</name>
<dbReference type="EMBL" id="AB266448">
    <property type="protein sequence ID" value="BAF45347.1"/>
    <property type="molecule type" value="mRNA"/>
</dbReference>
<dbReference type="EMBL" id="CABZ01056306">
    <property type="status" value="NOT_ANNOTATED_CDS"/>
    <property type="molecule type" value="Genomic_DNA"/>
</dbReference>
<dbReference type="EMBL" id="CU565519">
    <property type="status" value="NOT_ANNOTATED_CDS"/>
    <property type="molecule type" value="Genomic_DNA"/>
</dbReference>
<dbReference type="EMBL" id="CU607073">
    <property type="status" value="NOT_ANNOTATED_CDS"/>
    <property type="molecule type" value="Genomic_DNA"/>
</dbReference>
<dbReference type="EMBL" id="FO704673">
    <property type="status" value="NOT_ANNOTATED_CDS"/>
    <property type="molecule type" value="Genomic_DNA"/>
</dbReference>
<dbReference type="EMBL" id="FO704675">
    <property type="status" value="NOT_ANNOTATED_CDS"/>
    <property type="molecule type" value="Genomic_DNA"/>
</dbReference>
<dbReference type="EMBL" id="BC063319">
    <property type="protein sequence ID" value="AAH63319.1"/>
    <property type="molecule type" value="mRNA"/>
</dbReference>
<dbReference type="RefSeq" id="NP_957166.1">
    <property type="nucleotide sequence ID" value="NM_200872.1"/>
</dbReference>
<dbReference type="SMR" id="F1RCP1"/>
<dbReference type="FunCoup" id="F1RCP1">
    <property type="interactions" value="2543"/>
</dbReference>
<dbReference type="STRING" id="7955.ENSDARP00000100986"/>
<dbReference type="PaxDb" id="7955-ENSDARP00000100986"/>
<dbReference type="Ensembl" id="ENSDART00000115237">
    <property type="protein sequence ID" value="ENSDARP00000100986"/>
    <property type="gene ID" value="ENSDARG00000079128"/>
</dbReference>
<dbReference type="GeneID" id="393846"/>
<dbReference type="KEGG" id="dre:393846"/>
<dbReference type="AGR" id="ZFIN:ZDB-GENE-040426-1666"/>
<dbReference type="CTD" id="8678"/>
<dbReference type="ZFIN" id="ZDB-GENE-040426-1666">
    <property type="gene designation" value="becn1"/>
</dbReference>
<dbReference type="eggNOG" id="KOG2751">
    <property type="taxonomic scope" value="Eukaryota"/>
</dbReference>
<dbReference type="InParanoid" id="F1RCP1"/>
<dbReference type="OMA" id="EWDVYKA"/>
<dbReference type="OrthoDB" id="20368at2759"/>
<dbReference type="TreeFam" id="TF314282"/>
<dbReference type="Reactome" id="R-DRE-5689880">
    <property type="pathway name" value="Ub-specific processing proteases"/>
</dbReference>
<dbReference type="PRO" id="PR:F1RCP1"/>
<dbReference type="Proteomes" id="UP000000437">
    <property type="component" value="Chromosome 12"/>
</dbReference>
<dbReference type="Bgee" id="ENSDARG00000079128">
    <property type="expression patterns" value="Expressed in brain and 23 other cell types or tissues"/>
</dbReference>
<dbReference type="ExpressionAtlas" id="F1RCP1">
    <property type="expression patterns" value="baseline"/>
</dbReference>
<dbReference type="GO" id="GO:0005776">
    <property type="term" value="C:autophagosome"/>
    <property type="evidence" value="ECO:0007669"/>
    <property type="project" value="UniProtKB-SubCell"/>
</dbReference>
<dbReference type="GO" id="GO:0005789">
    <property type="term" value="C:endoplasmic reticulum membrane"/>
    <property type="evidence" value="ECO:0007669"/>
    <property type="project" value="UniProtKB-SubCell"/>
</dbReference>
<dbReference type="GO" id="GO:0010008">
    <property type="term" value="C:endosome membrane"/>
    <property type="evidence" value="ECO:0007669"/>
    <property type="project" value="UniProtKB-SubCell"/>
</dbReference>
<dbReference type="GO" id="GO:0005794">
    <property type="term" value="C:Golgi apparatus"/>
    <property type="evidence" value="ECO:0007669"/>
    <property type="project" value="UniProtKB-SubCell"/>
</dbReference>
<dbReference type="GO" id="GO:0031966">
    <property type="term" value="C:mitochondrial membrane"/>
    <property type="evidence" value="ECO:0007669"/>
    <property type="project" value="UniProtKB-SubCell"/>
</dbReference>
<dbReference type="GO" id="GO:0000407">
    <property type="term" value="C:phagophore assembly site"/>
    <property type="evidence" value="ECO:0000318"/>
    <property type="project" value="GO_Central"/>
</dbReference>
<dbReference type="GO" id="GO:0034271">
    <property type="term" value="C:phosphatidylinositol 3-kinase complex, class III, type I"/>
    <property type="evidence" value="ECO:0000318"/>
    <property type="project" value="GO_Central"/>
</dbReference>
<dbReference type="GO" id="GO:0034272">
    <property type="term" value="C:phosphatidylinositol 3-kinase complex, class III, type II"/>
    <property type="evidence" value="ECO:0000318"/>
    <property type="project" value="GO_Central"/>
</dbReference>
<dbReference type="GO" id="GO:0043548">
    <property type="term" value="F:phosphatidylinositol 3-kinase binding"/>
    <property type="evidence" value="ECO:0000318"/>
    <property type="project" value="GO_Central"/>
</dbReference>
<dbReference type="GO" id="GO:0030674">
    <property type="term" value="F:protein-macromolecule adaptor activity"/>
    <property type="evidence" value="ECO:0000318"/>
    <property type="project" value="GO_Central"/>
</dbReference>
<dbReference type="GO" id="GO:0000045">
    <property type="term" value="P:autophagosome assembly"/>
    <property type="evidence" value="ECO:0000318"/>
    <property type="project" value="GO_Central"/>
</dbReference>
<dbReference type="GO" id="GO:0006914">
    <property type="term" value="P:autophagy"/>
    <property type="evidence" value="ECO:0000315"/>
    <property type="project" value="ZFIN"/>
</dbReference>
<dbReference type="GO" id="GO:0051301">
    <property type="term" value="P:cell division"/>
    <property type="evidence" value="ECO:0007669"/>
    <property type="project" value="UniProtKB-KW"/>
</dbReference>
<dbReference type="GO" id="GO:0006995">
    <property type="term" value="P:cellular response to nitrogen starvation"/>
    <property type="evidence" value="ECO:0000318"/>
    <property type="project" value="GO_Central"/>
</dbReference>
<dbReference type="GO" id="GO:0090398">
    <property type="term" value="P:cellular senescence"/>
    <property type="evidence" value="ECO:0000316"/>
    <property type="project" value="ZFIN"/>
</dbReference>
<dbReference type="GO" id="GO:0045022">
    <property type="term" value="P:early endosome to late endosome transport"/>
    <property type="evidence" value="ECO:0000250"/>
    <property type="project" value="UniProtKB"/>
</dbReference>
<dbReference type="GO" id="GO:0007507">
    <property type="term" value="P:heart development"/>
    <property type="evidence" value="ECO:0000315"/>
    <property type="project" value="ZFIN"/>
</dbReference>
<dbReference type="GO" id="GO:0045324">
    <property type="term" value="P:late endosome to vacuole transport"/>
    <property type="evidence" value="ECO:0000318"/>
    <property type="project" value="GO_Central"/>
</dbReference>
<dbReference type="GO" id="GO:0000423">
    <property type="term" value="P:mitophagy"/>
    <property type="evidence" value="ECO:0000318"/>
    <property type="project" value="GO_Central"/>
</dbReference>
<dbReference type="GO" id="GO:0010508">
    <property type="term" value="P:positive regulation of autophagy"/>
    <property type="evidence" value="ECO:0000250"/>
    <property type="project" value="UniProtKB"/>
</dbReference>
<dbReference type="GO" id="GO:0043416">
    <property type="term" value="P:regulation of skeletal muscle tissue regeneration"/>
    <property type="evidence" value="ECO:0000315"/>
    <property type="project" value="ZFIN"/>
</dbReference>
<dbReference type="FunFam" id="1.10.418.40:FF:000001">
    <property type="entry name" value="beclin-1 isoform X1"/>
    <property type="match status" value="1"/>
</dbReference>
<dbReference type="Gene3D" id="6.10.250.3110">
    <property type="match status" value="1"/>
</dbReference>
<dbReference type="Gene3D" id="1.10.418.40">
    <property type="entry name" value="Autophagy protein 6/Beclin 1"/>
    <property type="match status" value="1"/>
</dbReference>
<dbReference type="InterPro" id="IPR007243">
    <property type="entry name" value="Atg6/Beclin"/>
</dbReference>
<dbReference type="InterPro" id="IPR038274">
    <property type="entry name" value="Atg6/Beclin_C_sf"/>
</dbReference>
<dbReference type="InterPro" id="IPR041691">
    <property type="entry name" value="Atg6/beclin_CC"/>
</dbReference>
<dbReference type="InterPro" id="IPR040455">
    <property type="entry name" value="Atg6_BARA"/>
</dbReference>
<dbReference type="InterPro" id="IPR029318">
    <property type="entry name" value="BH3_dom"/>
</dbReference>
<dbReference type="PANTHER" id="PTHR12768">
    <property type="entry name" value="BECLIN 1"/>
    <property type="match status" value="1"/>
</dbReference>
<dbReference type="PANTHER" id="PTHR12768:SF4">
    <property type="entry name" value="BECLIN-1"/>
    <property type="match status" value="1"/>
</dbReference>
<dbReference type="Pfam" id="PF04111">
    <property type="entry name" value="APG6"/>
    <property type="match status" value="1"/>
</dbReference>
<dbReference type="Pfam" id="PF17675">
    <property type="entry name" value="APG6_N"/>
    <property type="match status" value="1"/>
</dbReference>
<dbReference type="Pfam" id="PF15285">
    <property type="entry name" value="BH3"/>
    <property type="match status" value="1"/>
</dbReference>
<keyword id="KW-0072">Autophagy</keyword>
<keyword id="KW-0131">Cell cycle</keyword>
<keyword id="KW-0132">Cell division</keyword>
<keyword id="KW-0175">Coiled coil</keyword>
<keyword id="KW-0963">Cytoplasm</keyword>
<keyword id="KW-0968">Cytoplasmic vesicle</keyword>
<keyword id="KW-0256">Endoplasmic reticulum</keyword>
<keyword id="KW-0967">Endosome</keyword>
<keyword id="KW-0333">Golgi apparatus</keyword>
<keyword id="KW-1017">Isopeptide bond</keyword>
<keyword id="KW-0472">Membrane</keyword>
<keyword id="KW-0496">Mitochondrion</keyword>
<keyword id="KW-1185">Reference proteome</keyword>
<keyword id="KW-0832">Ubl conjugation</keyword>
<organism>
    <name type="scientific">Danio rerio</name>
    <name type="common">Zebrafish</name>
    <name type="synonym">Brachydanio rerio</name>
    <dbReference type="NCBI Taxonomy" id="7955"/>
    <lineage>
        <taxon>Eukaryota</taxon>
        <taxon>Metazoa</taxon>
        <taxon>Chordata</taxon>
        <taxon>Craniata</taxon>
        <taxon>Vertebrata</taxon>
        <taxon>Euteleostomi</taxon>
        <taxon>Actinopterygii</taxon>
        <taxon>Neopterygii</taxon>
        <taxon>Teleostei</taxon>
        <taxon>Ostariophysi</taxon>
        <taxon>Cypriniformes</taxon>
        <taxon>Danionidae</taxon>
        <taxon>Danioninae</taxon>
        <taxon>Danio</taxon>
    </lineage>
</organism>
<accession>F1RCP1</accession>
<accession>A2A135</accession>
<accession>Q6P4P7</accession>
<proteinExistence type="evidence at transcript level"/>
<sequence length="447" mass="51410">METLRFSSNTMQVSFVCQRCNQPLKLDTSFNVLDRMTIHELTAPLVMVTANKQQDSGESSSFPEETFLENKQDGVARKFIPPARMMSAESTNSFTLIGEASDGGTMENLSRRLKVTSNLFDIMSGQTDIDHPLCEECTDTLLDHLDTQLNITENECQNYKSCLELLSQLPEEEEASLLNALQQLKQEEESLIQELESIETKREAVAKELDEGRNHSQLMDTEELRYQKEYCEFKRQQLELDDDLKSVDNQMRYCQIQLDKLKKTNVFNATFHIWHSGQFGTINNFRLGRLPSVPVEWNEINAAWGQTVLLLHALASKMGLCFQRYQLVPYGNHSYLESLSDKSKELPLYCSGGLRFFWDNKFDHAMVAFLDCVQQFKEEVEKDDTGFCLPYRMDVDKGKIEDTGGSGGSYSIKTQFNSEEQWTKALKFMLTNLKWGLAWVSSQFYNR</sequence>
<comment type="function">
    <text evidence="1 5 6 9">Plays a central role in autophagy (PubMed:24441423, PubMed:27467399, PubMed:28445460). Acts as a core subunit of different PI3K complex forms that mediate formation of phosphatidylinositol 3-phosphate and are believed to play a role in multiple membrane trafficking pathways: PI3KC3-C1 is involved in initiation of autophagosomes and PI3KC3-C2 in maturation of autophagosomes and endocytosis (By similarity). Involved in regulation of degradative endocytic trafficking and required for the abscission step in cytokinesis, probably in the context of PI3KC3-C2 (By similarity). Essential for the formation of PI3KC3-C2 but not PI3KC3-C1 PI3K complex forms (By similarity). Involved in endocytosis including endosome formation in neuronal cells (By similarity).</text>
</comment>
<comment type="subunit">
    <text evidence="1 2 9">Component of the PI3K (PI3KC3/PI3K-III/class III phosphatidylinositol 3-kinase) complex (By similarity). Interacts with the poly-Gln domain of ATXN3; the interaction causes deubiquitination at Lys-399 and stabilizes BECN1 (PubMed:28445460).</text>
</comment>
<comment type="subcellular location">
    <subcellularLocation>
        <location evidence="1">Cytoplasm</location>
    </subcellularLocation>
    <subcellularLocation>
        <location evidence="1">Golgi apparatus</location>
        <location evidence="1">trans-Golgi network membrane</location>
        <topology evidence="1">Peripheral membrane protein</topology>
    </subcellularLocation>
    <subcellularLocation>
        <location evidence="1">Endosome membrane</location>
        <topology evidence="1">Peripheral membrane protein</topology>
    </subcellularLocation>
    <subcellularLocation>
        <location evidence="1">Endoplasmic reticulum membrane</location>
        <topology evidence="1">Peripheral membrane protein</topology>
    </subcellularLocation>
    <subcellularLocation>
        <location evidence="1">Mitochondrion membrane</location>
        <topology evidence="1">Peripheral membrane protein</topology>
    </subcellularLocation>
    <subcellularLocation>
        <location evidence="1">Endosome</location>
    </subcellularLocation>
    <subcellularLocation>
        <location evidence="8">Cytoplasmic vesicle</location>
        <location evidence="8">Autophagosome</location>
    </subcellularLocation>
</comment>
<comment type="induction">
    <text evidence="4">Expressed during follicle development in the ovary (PubMed:23195281).</text>
</comment>
<comment type="domain">
    <text evidence="2">The coiled coil domain can form antiparallel homodimers and mediates dimerization with the coiled coil domains of ATG14 or UVRAG involved in the formation of PI3K complexes.</text>
</comment>
<comment type="domain">
    <text evidence="9">The C-terminal evolutionary conserved domain (ECD) contains poly-Gln-binding domains such as the ATXN3 poly-Gln motif, consistent with structural docking models revealing two highly scored poly-Gln-binding pockets in the ECD. As some binding is observed with BECN1 lacking the ECD, other domains of BECN1 may also interact with ATXN3.</text>
</comment>
<comment type="PTM">
    <text evidence="9">Polyubiquitinated at Lys-399 with 'Lys-48'-linkages (PubMed:28445460). 'Lys-48'-linked polyubiquitination of Lys-399 leads to degradation (PubMed:28445460). Deubiquitinated by ATXN3, leading to stabilization (PubMed:28445460).</text>
</comment>
<comment type="disruption phenotype">
    <text evidence="5 6">Results in defects in morphogenesis, increased numbers of dead cells, abnormal heart structure, and reduced organismal survival (PubMed:24441423). Reduces the regenerative response to muscle injury with accumulation of sarcomeric and nuclear debris (PubMed:27467399).</text>
</comment>
<comment type="miscellaneous">
    <text evidence="7">Expanded poly-Gln tracts inhibit ATXN3-BECN1 interaction, decrease BECN1 levels and impair starvation-induced autophagy (PubMed:28445460).</text>
</comment>
<comment type="similarity">
    <text evidence="8">Belongs to the beclin family.</text>
</comment>